<sequence length="241" mass="26690">MGRAFEVRKSSMAKTANAKTKVNSKYGKEIYVAAKNGEPDPDVNQTLRRLIEKAKKDQVPAHVIEKAIEKAAGGAGEDYSTARYEGYGPGNCMVIVDCLTDNPNRTIKDVRLPFTKTDSKIGTPGCVAHMFDHFAVLGFSGDDDEVVLEALMMADVDVTDVEVEDGKVSVFAPHTEYFKAKTALEEAFEGINFEVDEITFVPQVHIEITDEEVIANFDKFITMLEDCDDVQNIYHNAIIKN</sequence>
<proteinExistence type="inferred from homology"/>
<organism>
    <name type="scientific">Pseudoalteromonas translucida (strain TAC 125)</name>
    <dbReference type="NCBI Taxonomy" id="326442"/>
    <lineage>
        <taxon>Bacteria</taxon>
        <taxon>Pseudomonadati</taxon>
        <taxon>Pseudomonadota</taxon>
        <taxon>Gammaproteobacteria</taxon>
        <taxon>Alteromonadales</taxon>
        <taxon>Pseudoalteromonadaceae</taxon>
        <taxon>Pseudoalteromonas</taxon>
    </lineage>
</organism>
<name>Y3560_PSET1</name>
<evidence type="ECO:0000255" key="1">
    <source>
        <dbReference type="HAMAP-Rule" id="MF_00693"/>
    </source>
</evidence>
<feature type="chain" id="PRO_0000257099" description="Probable transcriptional regulatory protein PSHAb0060">
    <location>
        <begin position="1"/>
        <end position="241"/>
    </location>
</feature>
<gene>
    <name type="ordered locus">PSHAb0060</name>
</gene>
<dbReference type="EMBL" id="CR954247">
    <property type="protein sequence ID" value="CAI89110.1"/>
    <property type="molecule type" value="Genomic_DNA"/>
</dbReference>
<dbReference type="SMR" id="Q3ICS0"/>
<dbReference type="STRING" id="326442.PSHAb0060"/>
<dbReference type="KEGG" id="pha:PSHAb0060"/>
<dbReference type="eggNOG" id="COG0217">
    <property type="taxonomic scope" value="Bacteria"/>
</dbReference>
<dbReference type="HOGENOM" id="CLU_062974_2_0_6"/>
<dbReference type="BioCyc" id="PHAL326442:PSHA_RS15150-MONOMER"/>
<dbReference type="Proteomes" id="UP000006843">
    <property type="component" value="Chromosome II"/>
</dbReference>
<dbReference type="GO" id="GO:0005829">
    <property type="term" value="C:cytosol"/>
    <property type="evidence" value="ECO:0007669"/>
    <property type="project" value="TreeGrafter"/>
</dbReference>
<dbReference type="GO" id="GO:0003677">
    <property type="term" value="F:DNA binding"/>
    <property type="evidence" value="ECO:0007669"/>
    <property type="project" value="UniProtKB-UniRule"/>
</dbReference>
<dbReference type="GO" id="GO:0006355">
    <property type="term" value="P:regulation of DNA-templated transcription"/>
    <property type="evidence" value="ECO:0007669"/>
    <property type="project" value="UniProtKB-UniRule"/>
</dbReference>
<dbReference type="FunFam" id="1.10.10.200:FF:000003">
    <property type="entry name" value="Probable transcriptional regulatory protein YeeN"/>
    <property type="match status" value="1"/>
</dbReference>
<dbReference type="Gene3D" id="1.10.10.200">
    <property type="match status" value="1"/>
</dbReference>
<dbReference type="Gene3D" id="3.30.70.980">
    <property type="match status" value="2"/>
</dbReference>
<dbReference type="HAMAP" id="MF_00693">
    <property type="entry name" value="Transcrip_reg_TACO1"/>
    <property type="match status" value="1"/>
</dbReference>
<dbReference type="InterPro" id="IPR017856">
    <property type="entry name" value="Integrase-like_N"/>
</dbReference>
<dbReference type="InterPro" id="IPR048300">
    <property type="entry name" value="TACO1_YebC-like_2nd/3rd_dom"/>
</dbReference>
<dbReference type="InterPro" id="IPR049083">
    <property type="entry name" value="TACO1_YebC_N"/>
</dbReference>
<dbReference type="InterPro" id="IPR002876">
    <property type="entry name" value="Transcrip_reg_TACO1-like"/>
</dbReference>
<dbReference type="InterPro" id="IPR026564">
    <property type="entry name" value="Transcrip_reg_TACO1-like_dom3"/>
</dbReference>
<dbReference type="InterPro" id="IPR029072">
    <property type="entry name" value="YebC-like"/>
</dbReference>
<dbReference type="NCBIfam" id="NF009044">
    <property type="entry name" value="PRK12378.1"/>
    <property type="match status" value="1"/>
</dbReference>
<dbReference type="PANTHER" id="PTHR12532">
    <property type="entry name" value="TRANSLATIONAL ACTIVATOR OF CYTOCHROME C OXIDASE 1"/>
    <property type="match status" value="1"/>
</dbReference>
<dbReference type="PANTHER" id="PTHR12532:SF0">
    <property type="entry name" value="TRANSLATIONAL ACTIVATOR OF CYTOCHROME C OXIDASE 1"/>
    <property type="match status" value="1"/>
</dbReference>
<dbReference type="Pfam" id="PF20772">
    <property type="entry name" value="TACO1_YebC_N"/>
    <property type="match status" value="1"/>
</dbReference>
<dbReference type="Pfam" id="PF01709">
    <property type="entry name" value="Transcrip_reg"/>
    <property type="match status" value="1"/>
</dbReference>
<dbReference type="SUPFAM" id="SSF75625">
    <property type="entry name" value="YebC-like"/>
    <property type="match status" value="1"/>
</dbReference>
<comment type="subcellular location">
    <subcellularLocation>
        <location evidence="1">Cytoplasm</location>
    </subcellularLocation>
</comment>
<comment type="similarity">
    <text evidence="1">Belongs to the TACO1 family.</text>
</comment>
<accession>Q3ICS0</accession>
<keyword id="KW-0963">Cytoplasm</keyword>
<keyword id="KW-0238">DNA-binding</keyword>
<keyword id="KW-1185">Reference proteome</keyword>
<keyword id="KW-0804">Transcription</keyword>
<keyword id="KW-0805">Transcription regulation</keyword>
<reference key="1">
    <citation type="journal article" date="2005" name="Genome Res.">
        <title>Coping with cold: the genome of the versatile marine Antarctica bacterium Pseudoalteromonas haloplanktis TAC125.</title>
        <authorList>
            <person name="Medigue C."/>
            <person name="Krin E."/>
            <person name="Pascal G."/>
            <person name="Barbe V."/>
            <person name="Bernsel A."/>
            <person name="Bertin P.N."/>
            <person name="Cheung F."/>
            <person name="Cruveiller S."/>
            <person name="D'Amico S."/>
            <person name="Duilio A."/>
            <person name="Fang G."/>
            <person name="Feller G."/>
            <person name="Ho C."/>
            <person name="Mangenot S."/>
            <person name="Marino G."/>
            <person name="Nilsson J."/>
            <person name="Parrilli E."/>
            <person name="Rocha E.P.C."/>
            <person name="Rouy Z."/>
            <person name="Sekowska A."/>
            <person name="Tutino M.L."/>
            <person name="Vallenet D."/>
            <person name="von Heijne G."/>
            <person name="Danchin A."/>
        </authorList>
    </citation>
    <scope>NUCLEOTIDE SEQUENCE [LARGE SCALE GENOMIC DNA]</scope>
    <source>
        <strain>TAC 125</strain>
    </source>
</reference>
<protein>
    <recommendedName>
        <fullName evidence="1">Probable transcriptional regulatory protein PSHAb0060</fullName>
    </recommendedName>
</protein>